<keyword id="KW-0108">Calcium channel impairing toxin</keyword>
<keyword id="KW-1015">Disulfide bond</keyword>
<keyword id="KW-0872">Ion channel impairing toxin</keyword>
<keyword id="KW-0960">Knottin</keyword>
<keyword id="KW-0528">Neurotoxin</keyword>
<keyword id="KW-0964">Secreted</keyword>
<keyword id="KW-0732">Signal</keyword>
<keyword id="KW-0800">Toxin</keyword>
<keyword id="KW-1218">Voltage-gated calcium channel impairing toxin</keyword>
<name>PLK7A_PLARH</name>
<protein>
    <recommendedName>
        <fullName evidence="5">U-reduvitoxin-Pr7a</fullName>
        <shortName evidence="5">U-RDTX-Pr7a</shortName>
    </recommendedName>
</protein>
<evidence type="ECO:0000250" key="1">
    <source>
        <dbReference type="UniProtKB" id="P58606"/>
    </source>
</evidence>
<evidence type="ECO:0000250" key="2">
    <source>
        <dbReference type="UniProtKB" id="P58608"/>
    </source>
</evidence>
<evidence type="ECO:0000255" key="3"/>
<evidence type="ECO:0000269" key="4">
    <source>
    </source>
</evidence>
<evidence type="ECO:0000303" key="5">
    <source>
    </source>
</evidence>
<evidence type="ECO:0000305" key="6"/>
<evidence type="ECO:0000305" key="7">
    <source>
    </source>
</evidence>
<organism>
    <name type="scientific">Platymeris rhadamanthus</name>
    <name type="common">Red spot assassin bug</name>
    <dbReference type="NCBI Taxonomy" id="1134088"/>
    <lineage>
        <taxon>Eukaryota</taxon>
        <taxon>Metazoa</taxon>
        <taxon>Ecdysozoa</taxon>
        <taxon>Arthropoda</taxon>
        <taxon>Hexapoda</taxon>
        <taxon>Insecta</taxon>
        <taxon>Pterygota</taxon>
        <taxon>Neoptera</taxon>
        <taxon>Paraneoptera</taxon>
        <taxon>Hemiptera</taxon>
        <taxon>Heteroptera</taxon>
        <taxon>Panheteroptera</taxon>
        <taxon>Cimicomorpha</taxon>
        <taxon>Reduviidae</taxon>
        <taxon>Platymeris</taxon>
    </lineage>
</organism>
<comment type="function">
    <text evidence="2">Binds reversibly and blocks P/Q-type voltage-gated calcium channels (Cav).</text>
</comment>
<comment type="subcellular location">
    <subcellularLocation>
        <location evidence="4">Secreted</location>
    </subcellularLocation>
</comment>
<comment type="tissue specificity">
    <text evidence="7">Expressed by the venom gland.</text>
</comment>
<comment type="domain">
    <text evidence="6">The presence of a 'disulfide through disulfide knot' structurally defines this protein as a knottin.</text>
</comment>
<comment type="mass spectrometry">
    <text>Monoisotopic mass.</text>
</comment>
<comment type="similarity">
    <text evidence="6">Belongs to the venom Ptu1-like knottin family.</text>
</comment>
<sequence>MDFLRILLFVLACIMALFTSAIAGGCIQRYGKCSTENSNCCAPSECYFSFNQCF</sequence>
<reference key="1">
    <citation type="journal article" date="2019" name="Toxins">
        <title>Missiles of mass disruption: composition and glandular origin of venom used as a projectile defensive weapon by the assassin bug Platymeris rhadamanthus.</title>
        <authorList>
            <person name="Walker A.A."/>
            <person name="Robinson S.D."/>
            <person name="Undheim E.A.B."/>
            <person name="Jin J."/>
            <person name="Han X."/>
            <person name="Fry B.G."/>
            <person name="Vetter I."/>
            <person name="King G.F."/>
        </authorList>
    </citation>
    <scope>NUCLEOTIDE SEQUENCE [MRNA]</scope>
    <scope>MASS SPECTROMETRY</scope>
    <scope>SUBCELLULAR LOCATION</scope>
    <source>
        <tissue>Venom</tissue>
        <tissue>Venom gland</tissue>
    </source>
</reference>
<accession>A0A6B9KZA1</accession>
<feature type="signal peptide" evidence="3">
    <location>
        <begin position="1"/>
        <end position="23"/>
    </location>
</feature>
<feature type="chain" id="PRO_5025499838" description="U-reduvitoxin-Pr7a" evidence="4">
    <location>
        <begin position="24"/>
        <end position="54"/>
    </location>
</feature>
<feature type="disulfide bond" evidence="1">
    <location>
        <begin position="26"/>
        <end position="41"/>
    </location>
</feature>
<feature type="disulfide bond" evidence="1">
    <location>
        <begin position="33"/>
        <end position="46"/>
    </location>
</feature>
<feature type="disulfide bond" evidence="1">
    <location>
        <begin position="40"/>
        <end position="53"/>
    </location>
</feature>
<proteinExistence type="evidence at protein level"/>
<dbReference type="EMBL" id="MN208351">
    <property type="protein sequence ID" value="QHB21540.1"/>
    <property type="molecule type" value="mRNA"/>
</dbReference>
<dbReference type="GO" id="GO:0005576">
    <property type="term" value="C:extracellular region"/>
    <property type="evidence" value="ECO:0007669"/>
    <property type="project" value="UniProtKB-SubCell"/>
</dbReference>
<dbReference type="GO" id="GO:0005246">
    <property type="term" value="F:calcium channel regulator activity"/>
    <property type="evidence" value="ECO:0007669"/>
    <property type="project" value="UniProtKB-KW"/>
</dbReference>
<dbReference type="GO" id="GO:0090729">
    <property type="term" value="F:toxin activity"/>
    <property type="evidence" value="ECO:0007669"/>
    <property type="project" value="UniProtKB-KW"/>
</dbReference>